<reference key="1">
    <citation type="journal article" date="2004" name="Proc. Natl. Acad. Sci. U.S.A.">
        <title>The complete genomic sequence of Nocardia farcinica IFM 10152.</title>
        <authorList>
            <person name="Ishikawa J."/>
            <person name="Yamashita A."/>
            <person name="Mikami Y."/>
            <person name="Hoshino Y."/>
            <person name="Kurita H."/>
            <person name="Hotta K."/>
            <person name="Shiba T."/>
            <person name="Hattori M."/>
        </authorList>
    </citation>
    <scope>NUCLEOTIDE SEQUENCE [LARGE SCALE GENOMIC DNA]</scope>
    <source>
        <strain>IFM 10152</strain>
    </source>
</reference>
<feature type="chain" id="PRO_0000243311" description="Dephospho-CoA kinase">
    <location>
        <begin position="1"/>
        <end position="383"/>
    </location>
</feature>
<feature type="domain" description="DPCK" evidence="1">
    <location>
        <begin position="3"/>
        <end position="201"/>
    </location>
</feature>
<feature type="region of interest" description="UPF0157">
    <location>
        <begin position="196"/>
        <end position="383"/>
    </location>
</feature>
<feature type="binding site" evidence="1">
    <location>
        <begin position="11"/>
        <end position="16"/>
    </location>
    <ligand>
        <name>ATP</name>
        <dbReference type="ChEBI" id="CHEBI:30616"/>
    </ligand>
</feature>
<dbReference type="EC" id="2.7.1.24" evidence="1"/>
<dbReference type="EMBL" id="AP006618">
    <property type="protein sequence ID" value="BAD56745.1"/>
    <property type="molecule type" value="Genomic_DNA"/>
</dbReference>
<dbReference type="RefSeq" id="WP_011208430.1">
    <property type="nucleotide sequence ID" value="NC_006361.1"/>
</dbReference>
<dbReference type="SMR" id="Q5YYJ6"/>
<dbReference type="STRING" id="247156.NFA_18990"/>
<dbReference type="GeneID" id="61132681"/>
<dbReference type="KEGG" id="nfa:NFA_18990"/>
<dbReference type="eggNOG" id="COG0237">
    <property type="taxonomic scope" value="Bacteria"/>
</dbReference>
<dbReference type="eggNOG" id="COG2320">
    <property type="taxonomic scope" value="Bacteria"/>
</dbReference>
<dbReference type="HOGENOM" id="CLU_067032_0_0_11"/>
<dbReference type="OrthoDB" id="9812943at2"/>
<dbReference type="UniPathway" id="UPA00241">
    <property type="reaction ID" value="UER00356"/>
</dbReference>
<dbReference type="Proteomes" id="UP000006820">
    <property type="component" value="Chromosome"/>
</dbReference>
<dbReference type="GO" id="GO:0005737">
    <property type="term" value="C:cytoplasm"/>
    <property type="evidence" value="ECO:0007669"/>
    <property type="project" value="UniProtKB-SubCell"/>
</dbReference>
<dbReference type="GO" id="GO:0005524">
    <property type="term" value="F:ATP binding"/>
    <property type="evidence" value="ECO:0007669"/>
    <property type="project" value="UniProtKB-UniRule"/>
</dbReference>
<dbReference type="GO" id="GO:0004140">
    <property type="term" value="F:dephospho-CoA kinase activity"/>
    <property type="evidence" value="ECO:0007669"/>
    <property type="project" value="UniProtKB-UniRule"/>
</dbReference>
<dbReference type="GO" id="GO:0015937">
    <property type="term" value="P:coenzyme A biosynthetic process"/>
    <property type="evidence" value="ECO:0007669"/>
    <property type="project" value="UniProtKB-UniRule"/>
</dbReference>
<dbReference type="CDD" id="cd02022">
    <property type="entry name" value="DPCK"/>
    <property type="match status" value="1"/>
</dbReference>
<dbReference type="Gene3D" id="3.30.460.10">
    <property type="entry name" value="Beta Polymerase, domain 2"/>
    <property type="match status" value="1"/>
</dbReference>
<dbReference type="Gene3D" id="3.40.50.300">
    <property type="entry name" value="P-loop containing nucleotide triphosphate hydrolases"/>
    <property type="match status" value="1"/>
</dbReference>
<dbReference type="HAMAP" id="MF_00376">
    <property type="entry name" value="Dephospho_CoA_kinase"/>
    <property type="match status" value="1"/>
</dbReference>
<dbReference type="InterPro" id="IPR001977">
    <property type="entry name" value="Depp_CoAkinase"/>
</dbReference>
<dbReference type="InterPro" id="IPR007344">
    <property type="entry name" value="GrpB/CoaE"/>
</dbReference>
<dbReference type="InterPro" id="IPR043519">
    <property type="entry name" value="NT_sf"/>
</dbReference>
<dbReference type="InterPro" id="IPR027417">
    <property type="entry name" value="P-loop_NTPase"/>
</dbReference>
<dbReference type="NCBIfam" id="TIGR00152">
    <property type="entry name" value="dephospho-CoA kinase"/>
    <property type="match status" value="1"/>
</dbReference>
<dbReference type="NCBIfam" id="NF002879">
    <property type="entry name" value="PRK03333.1"/>
    <property type="match status" value="1"/>
</dbReference>
<dbReference type="PANTHER" id="PTHR10695:SF46">
    <property type="entry name" value="BIFUNCTIONAL COENZYME A SYNTHASE-RELATED"/>
    <property type="match status" value="1"/>
</dbReference>
<dbReference type="PANTHER" id="PTHR10695">
    <property type="entry name" value="DEPHOSPHO-COA KINASE-RELATED"/>
    <property type="match status" value="1"/>
</dbReference>
<dbReference type="Pfam" id="PF01121">
    <property type="entry name" value="CoaE"/>
    <property type="match status" value="1"/>
</dbReference>
<dbReference type="Pfam" id="PF04229">
    <property type="entry name" value="GrpB"/>
    <property type="match status" value="1"/>
</dbReference>
<dbReference type="SUPFAM" id="SSF81301">
    <property type="entry name" value="Nucleotidyltransferase"/>
    <property type="match status" value="1"/>
</dbReference>
<dbReference type="SUPFAM" id="SSF52540">
    <property type="entry name" value="P-loop containing nucleoside triphosphate hydrolases"/>
    <property type="match status" value="1"/>
</dbReference>
<dbReference type="PROSITE" id="PS51219">
    <property type="entry name" value="DPCK"/>
    <property type="match status" value="1"/>
</dbReference>
<sequence>MLRIGLTGGMGAGKSTVARILADLGAVIVDSDVIAREVVAPGTEGLAALVAAFGSDILAADGSLDRPALAAKAFADDAARAKLNSITHPLVGKRTAELIGAAPAEAIVVQDIPLLVENGLAPLMNLVLVVDVPAETRIRRLVEFRGVAEADARARIAAQATDEQRRAVADVLLDNSGPEGAVEQVVRELWERRLVPFERNLRAATPAAPGTSELRVDAERQAQAQRLVARLAVAGGAAAARIEHVGPTAVPDLPARDLLELQIVVADAAAATGLRDALGAAGFPAMSGEGSGALRAAAWHGSADPGRPAVVAVRVEGTPEQRFASALGERLRGDAALREEYLDVARKAEAEAAGSVGAAAGAAFDAVLHPWLAEVAERLLGTV</sequence>
<protein>
    <recommendedName>
        <fullName evidence="1">Dephospho-CoA kinase</fullName>
        <ecNumber evidence="1">2.7.1.24</ecNumber>
    </recommendedName>
    <alternativeName>
        <fullName evidence="1">Dephosphocoenzyme A kinase</fullName>
    </alternativeName>
</protein>
<organism>
    <name type="scientific">Nocardia farcinica (strain IFM 10152)</name>
    <dbReference type="NCBI Taxonomy" id="247156"/>
    <lineage>
        <taxon>Bacteria</taxon>
        <taxon>Bacillati</taxon>
        <taxon>Actinomycetota</taxon>
        <taxon>Actinomycetes</taxon>
        <taxon>Mycobacteriales</taxon>
        <taxon>Nocardiaceae</taxon>
        <taxon>Nocardia</taxon>
    </lineage>
</organism>
<gene>
    <name evidence="1" type="primary">coaE</name>
    <name type="ordered locus">NFA_18990</name>
</gene>
<name>COAE_NOCFA</name>
<comment type="function">
    <text evidence="1">Catalyzes the phosphorylation of the 3'-hydroxyl group of dephosphocoenzyme A to form coenzyme A.</text>
</comment>
<comment type="catalytic activity">
    <reaction evidence="1">
        <text>3'-dephospho-CoA + ATP = ADP + CoA + H(+)</text>
        <dbReference type="Rhea" id="RHEA:18245"/>
        <dbReference type="ChEBI" id="CHEBI:15378"/>
        <dbReference type="ChEBI" id="CHEBI:30616"/>
        <dbReference type="ChEBI" id="CHEBI:57287"/>
        <dbReference type="ChEBI" id="CHEBI:57328"/>
        <dbReference type="ChEBI" id="CHEBI:456216"/>
        <dbReference type="EC" id="2.7.1.24"/>
    </reaction>
</comment>
<comment type="pathway">
    <text evidence="1">Cofactor biosynthesis; coenzyme A biosynthesis; CoA from (R)-pantothenate: step 5/5.</text>
</comment>
<comment type="subcellular location">
    <subcellularLocation>
        <location evidence="1">Cytoplasm</location>
    </subcellularLocation>
</comment>
<comment type="domain">
    <text evidence="1">The C-terminal UPF0157 domain is involved in the proper folding of the full length enzyme.</text>
</comment>
<comment type="similarity">
    <text evidence="2">In the N-terminal section; belongs to the CoaE family.</text>
</comment>
<comment type="similarity">
    <text evidence="2">In the C-terminal section; belongs to the UPF0157 (GrpB) family.</text>
</comment>
<keyword id="KW-0067">ATP-binding</keyword>
<keyword id="KW-0173">Coenzyme A biosynthesis</keyword>
<keyword id="KW-0963">Cytoplasm</keyword>
<keyword id="KW-0418">Kinase</keyword>
<keyword id="KW-0547">Nucleotide-binding</keyword>
<keyword id="KW-1185">Reference proteome</keyword>
<keyword id="KW-0808">Transferase</keyword>
<evidence type="ECO:0000255" key="1">
    <source>
        <dbReference type="HAMAP-Rule" id="MF_00376"/>
    </source>
</evidence>
<evidence type="ECO:0000305" key="2"/>
<proteinExistence type="inferred from homology"/>
<accession>Q5YYJ6</accession>